<feature type="chain" id="PRO_1000068194" description="Large ribosomal subunit protein uL30">
    <location>
        <begin position="1"/>
        <end position="59"/>
    </location>
</feature>
<reference key="1">
    <citation type="submission" date="2007-02" db="EMBL/GenBank/DDBJ databases">
        <title>Complete sequence of Clostridium thermocellum ATCC 27405.</title>
        <authorList>
            <consortium name="US DOE Joint Genome Institute"/>
            <person name="Copeland A."/>
            <person name="Lucas S."/>
            <person name="Lapidus A."/>
            <person name="Barry K."/>
            <person name="Detter J.C."/>
            <person name="Glavina del Rio T."/>
            <person name="Hammon N."/>
            <person name="Israni S."/>
            <person name="Dalin E."/>
            <person name="Tice H."/>
            <person name="Pitluck S."/>
            <person name="Chertkov O."/>
            <person name="Brettin T."/>
            <person name="Bruce D."/>
            <person name="Han C."/>
            <person name="Tapia R."/>
            <person name="Gilna P."/>
            <person name="Schmutz J."/>
            <person name="Larimer F."/>
            <person name="Land M."/>
            <person name="Hauser L."/>
            <person name="Kyrpides N."/>
            <person name="Mikhailova N."/>
            <person name="Wu J.H.D."/>
            <person name="Newcomb M."/>
            <person name="Richardson P."/>
        </authorList>
    </citation>
    <scope>NUCLEOTIDE SEQUENCE [LARGE SCALE GENOMIC DNA]</scope>
    <source>
        <strain>ATCC 27405 / DSM 1237 / JCM 9322 / NBRC 103400 / NCIMB 10682 / NRRL B-4536 / VPI 7372</strain>
    </source>
</reference>
<organism>
    <name type="scientific">Acetivibrio thermocellus (strain ATCC 27405 / DSM 1237 / JCM 9322 / NBRC 103400 / NCIMB 10682 / NRRL B-4536 / VPI 7372)</name>
    <name type="common">Clostridium thermocellum</name>
    <dbReference type="NCBI Taxonomy" id="203119"/>
    <lineage>
        <taxon>Bacteria</taxon>
        <taxon>Bacillati</taxon>
        <taxon>Bacillota</taxon>
        <taxon>Clostridia</taxon>
        <taxon>Eubacteriales</taxon>
        <taxon>Oscillospiraceae</taxon>
        <taxon>Acetivibrio</taxon>
    </lineage>
</organism>
<protein>
    <recommendedName>
        <fullName evidence="1">Large ribosomal subunit protein uL30</fullName>
    </recommendedName>
    <alternativeName>
        <fullName evidence="2">50S ribosomal protein L30</fullName>
    </alternativeName>
</protein>
<sequence length="59" mass="6619">MAKLKITLVRSISKLNESQTATVRALGLRKRGSCVEQQDTPQIRGMIKKVEHVLSVEEI</sequence>
<dbReference type="EMBL" id="CP000568">
    <property type="protein sequence ID" value="ABN54119.1"/>
    <property type="molecule type" value="Genomic_DNA"/>
</dbReference>
<dbReference type="RefSeq" id="WP_003514658.1">
    <property type="nucleotide sequence ID" value="NC_009012.1"/>
</dbReference>
<dbReference type="SMR" id="A3DJJ0"/>
<dbReference type="STRING" id="203119.Cthe_2921"/>
<dbReference type="GeneID" id="35805948"/>
<dbReference type="KEGG" id="cth:Cthe_2921"/>
<dbReference type="eggNOG" id="COG1841">
    <property type="taxonomic scope" value="Bacteria"/>
</dbReference>
<dbReference type="HOGENOM" id="CLU_131047_2_1_9"/>
<dbReference type="OrthoDB" id="9812790at2"/>
<dbReference type="Proteomes" id="UP000002145">
    <property type="component" value="Chromosome"/>
</dbReference>
<dbReference type="GO" id="GO:0022625">
    <property type="term" value="C:cytosolic large ribosomal subunit"/>
    <property type="evidence" value="ECO:0007669"/>
    <property type="project" value="TreeGrafter"/>
</dbReference>
<dbReference type="GO" id="GO:0003735">
    <property type="term" value="F:structural constituent of ribosome"/>
    <property type="evidence" value="ECO:0007669"/>
    <property type="project" value="InterPro"/>
</dbReference>
<dbReference type="GO" id="GO:0006412">
    <property type="term" value="P:translation"/>
    <property type="evidence" value="ECO:0007669"/>
    <property type="project" value="UniProtKB-UniRule"/>
</dbReference>
<dbReference type="CDD" id="cd01658">
    <property type="entry name" value="Ribosomal_L30"/>
    <property type="match status" value="1"/>
</dbReference>
<dbReference type="Gene3D" id="3.30.1390.20">
    <property type="entry name" value="Ribosomal protein L30, ferredoxin-like fold domain"/>
    <property type="match status" value="1"/>
</dbReference>
<dbReference type="HAMAP" id="MF_01371_B">
    <property type="entry name" value="Ribosomal_uL30_B"/>
    <property type="match status" value="1"/>
</dbReference>
<dbReference type="InterPro" id="IPR036919">
    <property type="entry name" value="Ribo_uL30_ferredoxin-like_sf"/>
</dbReference>
<dbReference type="InterPro" id="IPR005996">
    <property type="entry name" value="Ribosomal_uL30_bac-type"/>
</dbReference>
<dbReference type="InterPro" id="IPR016082">
    <property type="entry name" value="Ribosomal_uL30_ferredoxin-like"/>
</dbReference>
<dbReference type="NCBIfam" id="TIGR01308">
    <property type="entry name" value="rpmD_bact"/>
    <property type="match status" value="1"/>
</dbReference>
<dbReference type="PANTHER" id="PTHR15892:SF2">
    <property type="entry name" value="LARGE RIBOSOMAL SUBUNIT PROTEIN UL30M"/>
    <property type="match status" value="1"/>
</dbReference>
<dbReference type="PANTHER" id="PTHR15892">
    <property type="entry name" value="MITOCHONDRIAL RIBOSOMAL PROTEIN L30"/>
    <property type="match status" value="1"/>
</dbReference>
<dbReference type="Pfam" id="PF00327">
    <property type="entry name" value="Ribosomal_L30"/>
    <property type="match status" value="1"/>
</dbReference>
<dbReference type="PIRSF" id="PIRSF002211">
    <property type="entry name" value="Ribosomal_L30_bac-type"/>
    <property type="match status" value="1"/>
</dbReference>
<dbReference type="SUPFAM" id="SSF55129">
    <property type="entry name" value="Ribosomal protein L30p/L7e"/>
    <property type="match status" value="1"/>
</dbReference>
<proteinExistence type="inferred from homology"/>
<gene>
    <name evidence="1" type="primary">rpmD</name>
    <name type="ordered locus">Cthe_2921</name>
</gene>
<name>RL30_ACET2</name>
<comment type="subunit">
    <text evidence="1">Part of the 50S ribosomal subunit.</text>
</comment>
<comment type="similarity">
    <text evidence="1">Belongs to the universal ribosomal protein uL30 family.</text>
</comment>
<evidence type="ECO:0000255" key="1">
    <source>
        <dbReference type="HAMAP-Rule" id="MF_01371"/>
    </source>
</evidence>
<evidence type="ECO:0000305" key="2"/>
<accession>A3DJJ0</accession>
<keyword id="KW-1185">Reference proteome</keyword>
<keyword id="KW-0687">Ribonucleoprotein</keyword>
<keyword id="KW-0689">Ribosomal protein</keyword>